<feature type="chain" id="PRO_0000261741" description="Large ribosomal subunit protein uL13">
    <location>
        <begin position="1"/>
        <end position="144"/>
    </location>
</feature>
<sequence length="144" mass="16398">MKTFSAKGNEVKRDWFVVDASEKVLGRLATEIARRLRGKHKAEYTPHVDTGDYIIVTNAEKVVVTGRKFKNKMYHHHTGFPGGIKSASFEKLQDKNPTKIIELAVKGMLPKNPLGREMYRKLKVYAGSEHPHTAQQPKQLEIEE</sequence>
<evidence type="ECO:0000255" key="1">
    <source>
        <dbReference type="HAMAP-Rule" id="MF_01366"/>
    </source>
</evidence>
<evidence type="ECO:0000305" key="2"/>
<name>RL13_LEGPA</name>
<accession>Q5X1I1</accession>
<proteinExistence type="inferred from homology"/>
<protein>
    <recommendedName>
        <fullName evidence="1">Large ribosomal subunit protein uL13</fullName>
    </recommendedName>
    <alternativeName>
        <fullName evidence="2">50S ribosomal protein L13</fullName>
    </alternativeName>
</protein>
<keyword id="KW-0687">Ribonucleoprotein</keyword>
<keyword id="KW-0689">Ribosomal protein</keyword>
<dbReference type="EMBL" id="CR628336">
    <property type="protein sequence ID" value="CAH13915.1"/>
    <property type="molecule type" value="Genomic_DNA"/>
</dbReference>
<dbReference type="RefSeq" id="WP_011947614.1">
    <property type="nucleotide sequence ID" value="NC_006368.1"/>
</dbReference>
<dbReference type="SMR" id="Q5X1I1"/>
<dbReference type="KEGG" id="lpp:lpp2762"/>
<dbReference type="LegioList" id="lpp2762"/>
<dbReference type="HOGENOM" id="CLU_082184_2_2_6"/>
<dbReference type="GO" id="GO:0022625">
    <property type="term" value="C:cytosolic large ribosomal subunit"/>
    <property type="evidence" value="ECO:0007669"/>
    <property type="project" value="TreeGrafter"/>
</dbReference>
<dbReference type="GO" id="GO:0003729">
    <property type="term" value="F:mRNA binding"/>
    <property type="evidence" value="ECO:0007669"/>
    <property type="project" value="TreeGrafter"/>
</dbReference>
<dbReference type="GO" id="GO:0003735">
    <property type="term" value="F:structural constituent of ribosome"/>
    <property type="evidence" value="ECO:0007669"/>
    <property type="project" value="InterPro"/>
</dbReference>
<dbReference type="GO" id="GO:0017148">
    <property type="term" value="P:negative regulation of translation"/>
    <property type="evidence" value="ECO:0007669"/>
    <property type="project" value="TreeGrafter"/>
</dbReference>
<dbReference type="GO" id="GO:0006412">
    <property type="term" value="P:translation"/>
    <property type="evidence" value="ECO:0007669"/>
    <property type="project" value="UniProtKB-UniRule"/>
</dbReference>
<dbReference type="CDD" id="cd00392">
    <property type="entry name" value="Ribosomal_L13"/>
    <property type="match status" value="1"/>
</dbReference>
<dbReference type="FunFam" id="3.90.1180.10:FF:000001">
    <property type="entry name" value="50S ribosomal protein L13"/>
    <property type="match status" value="1"/>
</dbReference>
<dbReference type="Gene3D" id="3.90.1180.10">
    <property type="entry name" value="Ribosomal protein L13"/>
    <property type="match status" value="1"/>
</dbReference>
<dbReference type="HAMAP" id="MF_01366">
    <property type="entry name" value="Ribosomal_uL13"/>
    <property type="match status" value="1"/>
</dbReference>
<dbReference type="InterPro" id="IPR005822">
    <property type="entry name" value="Ribosomal_uL13"/>
</dbReference>
<dbReference type="InterPro" id="IPR005823">
    <property type="entry name" value="Ribosomal_uL13_bac-type"/>
</dbReference>
<dbReference type="InterPro" id="IPR023563">
    <property type="entry name" value="Ribosomal_uL13_CS"/>
</dbReference>
<dbReference type="InterPro" id="IPR036899">
    <property type="entry name" value="Ribosomal_uL13_sf"/>
</dbReference>
<dbReference type="NCBIfam" id="TIGR01066">
    <property type="entry name" value="rplM_bact"/>
    <property type="match status" value="1"/>
</dbReference>
<dbReference type="PANTHER" id="PTHR11545:SF2">
    <property type="entry name" value="LARGE RIBOSOMAL SUBUNIT PROTEIN UL13M"/>
    <property type="match status" value="1"/>
</dbReference>
<dbReference type="PANTHER" id="PTHR11545">
    <property type="entry name" value="RIBOSOMAL PROTEIN L13"/>
    <property type="match status" value="1"/>
</dbReference>
<dbReference type="Pfam" id="PF00572">
    <property type="entry name" value="Ribosomal_L13"/>
    <property type="match status" value="1"/>
</dbReference>
<dbReference type="PIRSF" id="PIRSF002181">
    <property type="entry name" value="Ribosomal_L13"/>
    <property type="match status" value="1"/>
</dbReference>
<dbReference type="SUPFAM" id="SSF52161">
    <property type="entry name" value="Ribosomal protein L13"/>
    <property type="match status" value="1"/>
</dbReference>
<dbReference type="PROSITE" id="PS00783">
    <property type="entry name" value="RIBOSOMAL_L13"/>
    <property type="match status" value="1"/>
</dbReference>
<comment type="function">
    <text evidence="1">This protein is one of the early assembly proteins of the 50S ribosomal subunit, although it is not seen to bind rRNA by itself. It is important during the early stages of 50S assembly.</text>
</comment>
<comment type="subunit">
    <text evidence="1">Part of the 50S ribosomal subunit.</text>
</comment>
<comment type="similarity">
    <text evidence="1">Belongs to the universal ribosomal protein uL13 family.</text>
</comment>
<reference key="1">
    <citation type="journal article" date="2004" name="Nat. Genet.">
        <title>Evidence in the Legionella pneumophila genome for exploitation of host cell functions and high genome plasticity.</title>
        <authorList>
            <person name="Cazalet C."/>
            <person name="Rusniok C."/>
            <person name="Brueggemann H."/>
            <person name="Zidane N."/>
            <person name="Magnier A."/>
            <person name="Ma L."/>
            <person name="Tichit M."/>
            <person name="Jarraud S."/>
            <person name="Bouchier C."/>
            <person name="Vandenesch F."/>
            <person name="Kunst F."/>
            <person name="Etienne J."/>
            <person name="Glaser P."/>
            <person name="Buchrieser C."/>
        </authorList>
    </citation>
    <scope>NUCLEOTIDE SEQUENCE [LARGE SCALE GENOMIC DNA]</scope>
    <source>
        <strain>Paris</strain>
    </source>
</reference>
<organism>
    <name type="scientific">Legionella pneumophila (strain Paris)</name>
    <dbReference type="NCBI Taxonomy" id="297246"/>
    <lineage>
        <taxon>Bacteria</taxon>
        <taxon>Pseudomonadati</taxon>
        <taxon>Pseudomonadota</taxon>
        <taxon>Gammaproteobacteria</taxon>
        <taxon>Legionellales</taxon>
        <taxon>Legionellaceae</taxon>
        <taxon>Legionella</taxon>
    </lineage>
</organism>
<gene>
    <name evidence="1" type="primary">rplM</name>
    <name type="ordered locus">lpp2762</name>
</gene>